<proteinExistence type="inferred from homology"/>
<comment type="function">
    <text evidence="1">Type-I myosin implicated in the organization of the actin cytoskeleton. Required for proper actin cytoskeleton polarization. At the cell cortex, assembles in patch-like structures together with proteins from the actin-polymerizing machinery and promotes actin assembly. Functions as actin nucleation-promoting factor (NPF) for the Arp2/3 complex (By similarity).</text>
</comment>
<comment type="subcellular location">
    <subcellularLocation>
        <location evidence="1">Cytoplasm</location>
        <location evidence="1">Cytoskeleton</location>
        <location evidence="1">Actin patch</location>
    </subcellularLocation>
</comment>
<comment type="domain">
    <text evidence="1">The myosin motor domain displays actin-stimulated ATPase activity and generates a mechanochemical force.</text>
</comment>
<comment type="domain">
    <text evidence="1">The tail domain participates in molecular interactions that specify the role of the motor domain (By similarity). It is composed of several tail homology (TH) domains, namely a putative phospholipid-binding myosin tail domain (also named TH1), an Ala- and Pro-rich domain (TH2), followed by an SH3 domain and a C-terminal acidic domain (TH3).</text>
</comment>
<comment type="PTM">
    <text evidence="1">Phosphorylation of the TEDS site (Ser-369) is required for the polarization of the actin cytoskeleton. Phosphorylation probably activates the myosin-I ATPase activity (By similarity).</text>
</comment>
<comment type="similarity">
    <text evidence="7">Belongs to the TRAFAC class myosin-kinesin ATPase superfamily. Myosin family.</text>
</comment>
<feature type="chain" id="PRO_0000338547" description="Myosin-1">
    <location>
        <begin position="1"/>
        <end position="1251"/>
    </location>
</feature>
<feature type="domain" description="Myosin motor" evidence="4">
    <location>
        <begin position="48"/>
        <end position="727"/>
    </location>
</feature>
<feature type="domain" description="IQ 1">
    <location>
        <begin position="731"/>
        <end position="751"/>
    </location>
</feature>
<feature type="domain" description="IQ 2">
    <location>
        <begin position="752"/>
        <end position="777"/>
    </location>
</feature>
<feature type="domain" description="TH1" evidence="5">
    <location>
        <begin position="785"/>
        <end position="980"/>
    </location>
</feature>
<feature type="domain" description="SH3" evidence="3">
    <location>
        <begin position="1074"/>
        <end position="1135"/>
    </location>
</feature>
<feature type="region of interest" description="Disordered" evidence="6">
    <location>
        <begin position="1"/>
        <end position="37"/>
    </location>
</feature>
<feature type="region of interest" description="Actin-binding" evidence="1">
    <location>
        <begin position="416"/>
        <end position="498"/>
    </location>
</feature>
<feature type="region of interest" description="Disordered" evidence="6">
    <location>
        <begin position="958"/>
        <end position="1093"/>
    </location>
</feature>
<feature type="region of interest" description="Disordered" evidence="6">
    <location>
        <begin position="1135"/>
        <end position="1227"/>
    </location>
</feature>
<feature type="compositionally biased region" description="Basic and acidic residues" evidence="6">
    <location>
        <begin position="9"/>
        <end position="27"/>
    </location>
</feature>
<feature type="compositionally biased region" description="Low complexity" evidence="6">
    <location>
        <begin position="1040"/>
        <end position="1052"/>
    </location>
</feature>
<feature type="compositionally biased region" description="Pro residues" evidence="6">
    <location>
        <begin position="1061"/>
        <end position="1073"/>
    </location>
</feature>
<feature type="compositionally biased region" description="Pro residues" evidence="6">
    <location>
        <begin position="1139"/>
        <end position="1148"/>
    </location>
</feature>
<feature type="compositionally biased region" description="Polar residues" evidence="6">
    <location>
        <begin position="1150"/>
        <end position="1161"/>
    </location>
</feature>
<feature type="compositionally biased region" description="Polar residues" evidence="6">
    <location>
        <begin position="1216"/>
        <end position="1225"/>
    </location>
</feature>
<feature type="binding site" evidence="2">
    <location>
        <begin position="141"/>
        <end position="148"/>
    </location>
    <ligand>
        <name>ATP</name>
        <dbReference type="ChEBI" id="CHEBI:30616"/>
    </ligand>
</feature>
<feature type="modified residue" description="Phosphoserine" evidence="1">
    <location>
        <position position="369"/>
    </location>
</feature>
<reference key="1">
    <citation type="journal article" date="2009" name="Genome Res.">
        <title>Comparative genomic analyses of the human fungal pathogens Coccidioides and their relatives.</title>
        <authorList>
            <person name="Sharpton T.J."/>
            <person name="Stajich J.E."/>
            <person name="Rounsley S.D."/>
            <person name="Gardner M.J."/>
            <person name="Wortman J.R."/>
            <person name="Jordar V.S."/>
            <person name="Maiti R."/>
            <person name="Kodira C.D."/>
            <person name="Neafsey D.E."/>
            <person name="Zeng Q."/>
            <person name="Hung C.-Y."/>
            <person name="McMahan C."/>
            <person name="Muszewska A."/>
            <person name="Grynberg M."/>
            <person name="Mandel M.A."/>
            <person name="Kellner E.M."/>
            <person name="Barker B.M."/>
            <person name="Galgiani J.N."/>
            <person name="Orbach M.J."/>
            <person name="Kirkland T.N."/>
            <person name="Cole G.T."/>
            <person name="Henn M.R."/>
            <person name="Birren B.W."/>
            <person name="Taylor J.W."/>
        </authorList>
    </citation>
    <scope>NUCLEOTIDE SEQUENCE [LARGE SCALE GENOMIC DNA]</scope>
    <source>
        <strain>RS</strain>
    </source>
</reference>
<reference key="2">
    <citation type="journal article" date="2010" name="Genome Res.">
        <title>Population genomic sequencing of Coccidioides fungi reveals recent hybridization and transposon control.</title>
        <authorList>
            <person name="Neafsey D.E."/>
            <person name="Barker B.M."/>
            <person name="Sharpton T.J."/>
            <person name="Stajich J.E."/>
            <person name="Park D.J."/>
            <person name="Whiston E."/>
            <person name="Hung C.-Y."/>
            <person name="McMahan C."/>
            <person name="White J."/>
            <person name="Sykes S."/>
            <person name="Heiman D."/>
            <person name="Young S."/>
            <person name="Zeng Q."/>
            <person name="Abouelleil A."/>
            <person name="Aftuck L."/>
            <person name="Bessette D."/>
            <person name="Brown A."/>
            <person name="FitzGerald M."/>
            <person name="Lui A."/>
            <person name="Macdonald J.P."/>
            <person name="Priest M."/>
            <person name="Orbach M.J."/>
            <person name="Galgiani J.N."/>
            <person name="Kirkland T.N."/>
            <person name="Cole G.T."/>
            <person name="Birren B.W."/>
            <person name="Henn M.R."/>
            <person name="Taylor J.W."/>
            <person name="Rounsley S.D."/>
        </authorList>
    </citation>
    <scope>GENOME REANNOTATION</scope>
    <source>
        <strain>RS</strain>
    </source>
</reference>
<sequence>MGQSKRPFKNKEEKKSRGFGRSRHDDAGAGGRPQVKKAVFESTKKKEIGVSDLTLLSKVSNEAINENLKKRFEHGEIYTYIGHVLVSVNPFRDLGIYTDKVLESYRGKNRLEVPPHVFAVAEAGYYNMKAYKENQCVIISGESGAGKTEAAKRLMQYIANVSGGTDSSIQQTKDMVLATNPLLESFGNAKTLRNNNSSRFGKYLELQFNSVGEPVGATITNYLLEKSRVVGQIKNERNFHIFYQFTKAAPQSYRDAFGIQQPQSYVYTSRSQCFDVAGMNDAADFNETIEAMRIIGLRQAEQDNIFRVLSAILWLGNMQFQEDDHSNASINDQSIIDFVAYLLEVDAEGVQKALTQRIVETARGGRRGSIYEVPLNTVQATAVRDALAKALYFNLFDWIVQRVNASLTAKGTVTNTIGILDIYGFEIFERNSFEQLCINYVNEKLQQIFIQLTLKTEQEEYAREQIKWTPIKYFDNKVVCQLIEDKRPPGVFAALNDACATAHADSGAADQTFVGRLNFLSQNPNFESRQGQFIVKHYAGDVAYAVEGMTDKNKDQLLKDLLNLVNSSTNSFLHTLFPNRVNQDDKRRPPTAGDKIKASANDLVTTLAKAQPSYIRTIKPNDNKSPSEYNVANVIHQIKYLGLQENVRIRRAGFAYRQTFEKFVERFYLLSPKTSYAGEYTWTGDAESGARQILKDTSIPPEEYQMGVAKAFIKTPETLFALEHMRDRYWHNMATRIQRAWRNYLRYRTECAIRIQRFWRRVTGGLEFIKLRDQGHKILGGRKERRRYSLVGSRRFLGDYLGISNAGDMGDVIKSSINISSGENILYSCRCELLVTKFGRSSKPSPRLLILTSRNVYVVVQKFVNNQLSILAERMIPIGAIKFVSTSNLKDDWFSIGVGAQQEPDPLISCVFKTEFFTYLTNALRGQLNLRIGETIEYNKKPGKLAVVKAVKDPAVPRDDVYKSGTIRTGPGEPANSVSKPTPRPKQVPGKPITKGKLLRPGGPGGGPSKLAPRPKPVAQNLPENPRAAKQPAGEKFKPVAQSVTAVAAAHARTNSGSQNRPPPPPPPTQPPAPKKDTAKALYDFDSGRSNELPLRKGEIVQVVTKESNGWWLCMNLETSAQGWAPEAYLEPIVAKTPSLPPPPPSLPPQSKSAVSNTLPNGPSRVNGAAAKAKPAPPAPPFKRPDINRKAAPAAAPRDSAVSMNSHESPAGSGRATPSSLSNASIAGGLAEALRARQSAMQGKEQDDDDW</sequence>
<organism>
    <name type="scientific">Coccidioides immitis (strain RS)</name>
    <name type="common">Valley fever fungus</name>
    <dbReference type="NCBI Taxonomy" id="246410"/>
    <lineage>
        <taxon>Eukaryota</taxon>
        <taxon>Fungi</taxon>
        <taxon>Dikarya</taxon>
        <taxon>Ascomycota</taxon>
        <taxon>Pezizomycotina</taxon>
        <taxon>Eurotiomycetes</taxon>
        <taxon>Eurotiomycetidae</taxon>
        <taxon>Onygenales</taxon>
        <taxon>Onygenaceae</taxon>
        <taxon>Coccidioides</taxon>
    </lineage>
</organism>
<accession>Q1DLP2</accession>
<accession>J3K1J7</accession>
<dbReference type="EMBL" id="GG704913">
    <property type="protein sequence ID" value="EAS30025.3"/>
    <property type="molecule type" value="Genomic_DNA"/>
</dbReference>
<dbReference type="RefSeq" id="XP_001241608.1">
    <property type="nucleotide sequence ID" value="XM_001241607.2"/>
</dbReference>
<dbReference type="SMR" id="Q1DLP2"/>
<dbReference type="FunCoup" id="Q1DLP2">
    <property type="interactions" value="305"/>
</dbReference>
<dbReference type="STRING" id="246410.Q1DLP2"/>
<dbReference type="GeneID" id="4560098"/>
<dbReference type="KEGG" id="cim:CIMG_08771"/>
<dbReference type="VEuPathDB" id="FungiDB:CIMG_08771"/>
<dbReference type="InParanoid" id="Q1DLP2"/>
<dbReference type="OMA" id="PPEEYQM"/>
<dbReference type="OrthoDB" id="6108017at2759"/>
<dbReference type="Proteomes" id="UP000001261">
    <property type="component" value="Unassembled WGS sequence"/>
</dbReference>
<dbReference type="GO" id="GO:0030479">
    <property type="term" value="C:actin cortical patch"/>
    <property type="evidence" value="ECO:0007669"/>
    <property type="project" value="UniProtKB-SubCell"/>
</dbReference>
<dbReference type="GO" id="GO:0051286">
    <property type="term" value="C:cell tip"/>
    <property type="evidence" value="ECO:0007669"/>
    <property type="project" value="TreeGrafter"/>
</dbReference>
<dbReference type="GO" id="GO:0016459">
    <property type="term" value="C:myosin complex"/>
    <property type="evidence" value="ECO:0007669"/>
    <property type="project" value="UniProtKB-KW"/>
</dbReference>
<dbReference type="GO" id="GO:0005886">
    <property type="term" value="C:plasma membrane"/>
    <property type="evidence" value="ECO:0007669"/>
    <property type="project" value="TreeGrafter"/>
</dbReference>
<dbReference type="GO" id="GO:0051015">
    <property type="term" value="F:actin filament binding"/>
    <property type="evidence" value="ECO:0007669"/>
    <property type="project" value="TreeGrafter"/>
</dbReference>
<dbReference type="GO" id="GO:0005524">
    <property type="term" value="F:ATP binding"/>
    <property type="evidence" value="ECO:0007669"/>
    <property type="project" value="UniProtKB-KW"/>
</dbReference>
<dbReference type="GO" id="GO:0016787">
    <property type="term" value="F:hydrolase activity"/>
    <property type="evidence" value="ECO:0007669"/>
    <property type="project" value="UniProtKB-KW"/>
</dbReference>
<dbReference type="GO" id="GO:0000146">
    <property type="term" value="F:microfilament motor activity"/>
    <property type="evidence" value="ECO:0007669"/>
    <property type="project" value="TreeGrafter"/>
</dbReference>
<dbReference type="GO" id="GO:0051666">
    <property type="term" value="P:actin cortical patch localization"/>
    <property type="evidence" value="ECO:0007669"/>
    <property type="project" value="TreeGrafter"/>
</dbReference>
<dbReference type="GO" id="GO:0007015">
    <property type="term" value="P:actin filament organization"/>
    <property type="evidence" value="ECO:0007669"/>
    <property type="project" value="TreeGrafter"/>
</dbReference>
<dbReference type="GO" id="GO:0006897">
    <property type="term" value="P:endocytosis"/>
    <property type="evidence" value="ECO:0007669"/>
    <property type="project" value="TreeGrafter"/>
</dbReference>
<dbReference type="CDD" id="cd01378">
    <property type="entry name" value="MYSc_Myo1"/>
    <property type="match status" value="1"/>
</dbReference>
<dbReference type="CDD" id="cd11858">
    <property type="entry name" value="SH3_Myosin-I_fungi"/>
    <property type="match status" value="1"/>
</dbReference>
<dbReference type="FunFam" id="1.10.10.820:FF:000001">
    <property type="entry name" value="Myosin heavy chain"/>
    <property type="match status" value="1"/>
</dbReference>
<dbReference type="FunFam" id="1.20.120.720:FF:000015">
    <property type="entry name" value="Myosin I"/>
    <property type="match status" value="1"/>
</dbReference>
<dbReference type="FunFam" id="2.30.30.40:FF:000254">
    <property type="entry name" value="Myosin I MyoA/Myo5"/>
    <property type="match status" value="1"/>
</dbReference>
<dbReference type="FunFam" id="1.20.5.4820:FF:000004">
    <property type="entry name" value="Myosin IE"/>
    <property type="match status" value="1"/>
</dbReference>
<dbReference type="FunFam" id="1.20.58.530:FF:000007">
    <property type="entry name" value="Myosin IE"/>
    <property type="match status" value="1"/>
</dbReference>
<dbReference type="Gene3D" id="1.10.10.820">
    <property type="match status" value="1"/>
</dbReference>
<dbReference type="Gene3D" id="1.20.5.4820">
    <property type="match status" value="1"/>
</dbReference>
<dbReference type="Gene3D" id="1.20.58.530">
    <property type="match status" value="1"/>
</dbReference>
<dbReference type="Gene3D" id="3.40.850.10">
    <property type="entry name" value="Kinesin motor domain"/>
    <property type="match status" value="1"/>
</dbReference>
<dbReference type="Gene3D" id="1.20.120.720">
    <property type="entry name" value="Myosin VI head, motor domain, U50 subdomain"/>
    <property type="match status" value="1"/>
</dbReference>
<dbReference type="Gene3D" id="2.30.30.40">
    <property type="entry name" value="SH3 Domains"/>
    <property type="match status" value="1"/>
</dbReference>
<dbReference type="InterPro" id="IPR035535">
    <property type="entry name" value="Fungal_myosin-I_SH3"/>
</dbReference>
<dbReference type="InterPro" id="IPR036961">
    <property type="entry name" value="Kinesin_motor_dom_sf"/>
</dbReference>
<dbReference type="InterPro" id="IPR054489">
    <property type="entry name" value="Myo1_CA"/>
</dbReference>
<dbReference type="InterPro" id="IPR001609">
    <property type="entry name" value="Myosin_head_motor_dom-like"/>
</dbReference>
<dbReference type="InterPro" id="IPR010926">
    <property type="entry name" value="Myosin_TH1"/>
</dbReference>
<dbReference type="InterPro" id="IPR036072">
    <property type="entry name" value="MYSc_Myo1"/>
</dbReference>
<dbReference type="InterPro" id="IPR027417">
    <property type="entry name" value="P-loop_NTPase"/>
</dbReference>
<dbReference type="InterPro" id="IPR036028">
    <property type="entry name" value="SH3-like_dom_sf"/>
</dbReference>
<dbReference type="InterPro" id="IPR001452">
    <property type="entry name" value="SH3_domain"/>
</dbReference>
<dbReference type="PANTHER" id="PTHR13140">
    <property type="entry name" value="MYOSIN"/>
    <property type="match status" value="1"/>
</dbReference>
<dbReference type="PANTHER" id="PTHR13140:SF837">
    <property type="entry name" value="MYOSIN-3-RELATED"/>
    <property type="match status" value="1"/>
</dbReference>
<dbReference type="Pfam" id="PF22773">
    <property type="entry name" value="Myo1_CA"/>
    <property type="match status" value="1"/>
</dbReference>
<dbReference type="Pfam" id="PF00063">
    <property type="entry name" value="Myosin_head"/>
    <property type="match status" value="1"/>
</dbReference>
<dbReference type="Pfam" id="PF06017">
    <property type="entry name" value="Myosin_TH1"/>
    <property type="match status" value="1"/>
</dbReference>
<dbReference type="Pfam" id="PF00018">
    <property type="entry name" value="SH3_1"/>
    <property type="match status" value="1"/>
</dbReference>
<dbReference type="PRINTS" id="PR00193">
    <property type="entry name" value="MYOSINHEAVY"/>
</dbReference>
<dbReference type="SMART" id="SM00242">
    <property type="entry name" value="MYSc"/>
    <property type="match status" value="1"/>
</dbReference>
<dbReference type="SMART" id="SM00326">
    <property type="entry name" value="SH3"/>
    <property type="match status" value="1"/>
</dbReference>
<dbReference type="SUPFAM" id="SSF52540">
    <property type="entry name" value="P-loop containing nucleoside triphosphate hydrolases"/>
    <property type="match status" value="1"/>
</dbReference>
<dbReference type="SUPFAM" id="SSF50044">
    <property type="entry name" value="SH3-domain"/>
    <property type="match status" value="1"/>
</dbReference>
<dbReference type="PROSITE" id="PS51456">
    <property type="entry name" value="MYOSIN_MOTOR"/>
    <property type="match status" value="1"/>
</dbReference>
<dbReference type="PROSITE" id="PS50002">
    <property type="entry name" value="SH3"/>
    <property type="match status" value="1"/>
</dbReference>
<dbReference type="PROSITE" id="PS51757">
    <property type="entry name" value="TH1"/>
    <property type="match status" value="1"/>
</dbReference>
<evidence type="ECO:0000250" key="1"/>
<evidence type="ECO:0000255" key="2"/>
<evidence type="ECO:0000255" key="3">
    <source>
        <dbReference type="PROSITE-ProRule" id="PRU00192"/>
    </source>
</evidence>
<evidence type="ECO:0000255" key="4">
    <source>
        <dbReference type="PROSITE-ProRule" id="PRU00782"/>
    </source>
</evidence>
<evidence type="ECO:0000255" key="5">
    <source>
        <dbReference type="PROSITE-ProRule" id="PRU01093"/>
    </source>
</evidence>
<evidence type="ECO:0000256" key="6">
    <source>
        <dbReference type="SAM" id="MobiDB-lite"/>
    </source>
</evidence>
<evidence type="ECO:0000305" key="7"/>
<keyword id="KW-0009">Actin-binding</keyword>
<keyword id="KW-0067">ATP-binding</keyword>
<keyword id="KW-0963">Cytoplasm</keyword>
<keyword id="KW-0206">Cytoskeleton</keyword>
<keyword id="KW-0378">Hydrolase</keyword>
<keyword id="KW-0505">Motor protein</keyword>
<keyword id="KW-0518">Myosin</keyword>
<keyword id="KW-0547">Nucleotide-binding</keyword>
<keyword id="KW-0597">Phosphoprotein</keyword>
<keyword id="KW-1185">Reference proteome</keyword>
<keyword id="KW-0677">Repeat</keyword>
<keyword id="KW-0728">SH3 domain</keyword>
<name>MYO1_COCIM</name>
<gene>
    <name type="primary">MYO1</name>
    <name type="ORF">CIMG_08771</name>
</gene>
<protein>
    <recommendedName>
        <fullName>Myosin-1</fullName>
    </recommendedName>
    <alternativeName>
        <fullName>Class I unconventional myosin</fullName>
    </alternativeName>
    <alternativeName>
        <fullName>Type I myosin</fullName>
    </alternativeName>
</protein>